<reference key="1">
    <citation type="submission" date="2007-05" db="EMBL/GenBank/DDBJ databases">
        <title>Complete sequence of chromosome of Staphylococcus aureus subsp. aureus JH9.</title>
        <authorList>
            <consortium name="US DOE Joint Genome Institute"/>
            <person name="Copeland A."/>
            <person name="Lucas S."/>
            <person name="Lapidus A."/>
            <person name="Barry K."/>
            <person name="Detter J.C."/>
            <person name="Glavina del Rio T."/>
            <person name="Hammon N."/>
            <person name="Israni S."/>
            <person name="Pitluck S."/>
            <person name="Chain P."/>
            <person name="Malfatti S."/>
            <person name="Shin M."/>
            <person name="Vergez L."/>
            <person name="Schmutz J."/>
            <person name="Larimer F."/>
            <person name="Land M."/>
            <person name="Hauser L."/>
            <person name="Kyrpides N."/>
            <person name="Kim E."/>
            <person name="Tomasz A."/>
            <person name="Richardson P."/>
        </authorList>
    </citation>
    <scope>NUCLEOTIDE SEQUENCE [LARGE SCALE GENOMIC DNA]</scope>
    <source>
        <strain>JH9</strain>
    </source>
</reference>
<sequence>MNKPIGVIDSGVGGLTVAKEIMRQLPNETIYYLGDIGRCPYGPRPGEQVKQYTVEIARKLMEFDIKMLVIACNTATAVALEYLQKTLSIPVIGVIEPGARTAIMTTRNQNVLVLGTEGTIKSEAYRTHIKRINPHVEVHGVACPGFVPLVEQMRYSDPTITSIVIHQTLKRWRNSESDTVILGCTHYPLLYKPIYDYFGGKKTVISSGLETAREVSALLTFSNEHASYTEHPDHRFFATGDPTHITNIIKEWLNLSVNVERISVND</sequence>
<organism>
    <name type="scientific">Staphylococcus aureus (strain JH9)</name>
    <dbReference type="NCBI Taxonomy" id="359786"/>
    <lineage>
        <taxon>Bacteria</taxon>
        <taxon>Bacillati</taxon>
        <taxon>Bacillota</taxon>
        <taxon>Bacilli</taxon>
        <taxon>Bacillales</taxon>
        <taxon>Staphylococcaceae</taxon>
        <taxon>Staphylococcus</taxon>
    </lineage>
</organism>
<proteinExistence type="inferred from homology"/>
<accession>A5IS36</accession>
<keyword id="KW-0133">Cell shape</keyword>
<keyword id="KW-0961">Cell wall biogenesis/degradation</keyword>
<keyword id="KW-0413">Isomerase</keyword>
<keyword id="KW-0573">Peptidoglycan synthesis</keyword>
<protein>
    <recommendedName>
        <fullName evidence="1">Glutamate racemase</fullName>
        <ecNumber evidence="1">5.1.1.3</ecNumber>
    </recommendedName>
</protein>
<gene>
    <name evidence="1" type="primary">murI</name>
    <name type="ordered locus">SaurJH9_1209</name>
</gene>
<name>MURI_STAA9</name>
<feature type="chain" id="PRO_1000078577" description="Glutamate racemase">
    <location>
        <begin position="1"/>
        <end position="266"/>
    </location>
</feature>
<feature type="active site" description="Proton donor/acceptor" evidence="1">
    <location>
        <position position="72"/>
    </location>
</feature>
<feature type="active site" description="Proton donor/acceptor" evidence="1">
    <location>
        <position position="184"/>
    </location>
</feature>
<feature type="binding site" evidence="1">
    <location>
        <begin position="9"/>
        <end position="10"/>
    </location>
    <ligand>
        <name>substrate</name>
    </ligand>
</feature>
<feature type="binding site" evidence="1">
    <location>
        <begin position="41"/>
        <end position="42"/>
    </location>
    <ligand>
        <name>substrate</name>
    </ligand>
</feature>
<feature type="binding site" evidence="1">
    <location>
        <begin position="73"/>
        <end position="74"/>
    </location>
    <ligand>
        <name>substrate</name>
    </ligand>
</feature>
<feature type="binding site" evidence="1">
    <location>
        <begin position="185"/>
        <end position="186"/>
    </location>
    <ligand>
        <name>substrate</name>
    </ligand>
</feature>
<evidence type="ECO:0000255" key="1">
    <source>
        <dbReference type="HAMAP-Rule" id="MF_00258"/>
    </source>
</evidence>
<dbReference type="EC" id="5.1.1.3" evidence="1"/>
<dbReference type="EMBL" id="CP000703">
    <property type="protein sequence ID" value="ABQ49009.1"/>
    <property type="molecule type" value="Genomic_DNA"/>
</dbReference>
<dbReference type="SMR" id="A5IS36"/>
<dbReference type="KEGG" id="saj:SaurJH9_1209"/>
<dbReference type="HOGENOM" id="CLU_052344_0_2_9"/>
<dbReference type="UniPathway" id="UPA00219"/>
<dbReference type="GO" id="GO:0008881">
    <property type="term" value="F:glutamate racemase activity"/>
    <property type="evidence" value="ECO:0007669"/>
    <property type="project" value="UniProtKB-UniRule"/>
</dbReference>
<dbReference type="GO" id="GO:0071555">
    <property type="term" value="P:cell wall organization"/>
    <property type="evidence" value="ECO:0007669"/>
    <property type="project" value="UniProtKB-KW"/>
</dbReference>
<dbReference type="GO" id="GO:0009252">
    <property type="term" value="P:peptidoglycan biosynthetic process"/>
    <property type="evidence" value="ECO:0007669"/>
    <property type="project" value="UniProtKB-UniRule"/>
</dbReference>
<dbReference type="GO" id="GO:0008360">
    <property type="term" value="P:regulation of cell shape"/>
    <property type="evidence" value="ECO:0007669"/>
    <property type="project" value="UniProtKB-KW"/>
</dbReference>
<dbReference type="FunFam" id="3.40.50.1860:FF:000002">
    <property type="entry name" value="Glutamate racemase"/>
    <property type="match status" value="1"/>
</dbReference>
<dbReference type="Gene3D" id="3.40.50.1860">
    <property type="match status" value="2"/>
</dbReference>
<dbReference type="HAMAP" id="MF_00258">
    <property type="entry name" value="Glu_racemase"/>
    <property type="match status" value="1"/>
</dbReference>
<dbReference type="InterPro" id="IPR015942">
    <property type="entry name" value="Asp/Glu/hydantoin_racemase"/>
</dbReference>
<dbReference type="InterPro" id="IPR001920">
    <property type="entry name" value="Asp/Glu_race"/>
</dbReference>
<dbReference type="InterPro" id="IPR018187">
    <property type="entry name" value="Asp/Glu_racemase_AS_1"/>
</dbReference>
<dbReference type="InterPro" id="IPR033134">
    <property type="entry name" value="Asp/Glu_racemase_AS_2"/>
</dbReference>
<dbReference type="InterPro" id="IPR004391">
    <property type="entry name" value="Glu_race"/>
</dbReference>
<dbReference type="NCBIfam" id="TIGR00067">
    <property type="entry name" value="glut_race"/>
    <property type="match status" value="1"/>
</dbReference>
<dbReference type="NCBIfam" id="NF002035">
    <property type="entry name" value="PRK00865.1-3"/>
    <property type="match status" value="1"/>
</dbReference>
<dbReference type="PANTHER" id="PTHR21198">
    <property type="entry name" value="GLUTAMATE RACEMASE"/>
    <property type="match status" value="1"/>
</dbReference>
<dbReference type="PANTHER" id="PTHR21198:SF2">
    <property type="entry name" value="GLUTAMATE RACEMASE"/>
    <property type="match status" value="1"/>
</dbReference>
<dbReference type="Pfam" id="PF01177">
    <property type="entry name" value="Asp_Glu_race"/>
    <property type="match status" value="1"/>
</dbReference>
<dbReference type="SUPFAM" id="SSF53681">
    <property type="entry name" value="Aspartate/glutamate racemase"/>
    <property type="match status" value="2"/>
</dbReference>
<dbReference type="PROSITE" id="PS00923">
    <property type="entry name" value="ASP_GLU_RACEMASE_1"/>
    <property type="match status" value="1"/>
</dbReference>
<dbReference type="PROSITE" id="PS00924">
    <property type="entry name" value="ASP_GLU_RACEMASE_2"/>
    <property type="match status" value="1"/>
</dbReference>
<comment type="function">
    <text evidence="1">Provides the (R)-glutamate required for cell wall biosynthesis.</text>
</comment>
<comment type="catalytic activity">
    <reaction evidence="1">
        <text>L-glutamate = D-glutamate</text>
        <dbReference type="Rhea" id="RHEA:12813"/>
        <dbReference type="ChEBI" id="CHEBI:29985"/>
        <dbReference type="ChEBI" id="CHEBI:29986"/>
        <dbReference type="EC" id="5.1.1.3"/>
    </reaction>
</comment>
<comment type="pathway">
    <text evidence="1">Cell wall biogenesis; peptidoglycan biosynthesis.</text>
</comment>
<comment type="similarity">
    <text evidence="1">Belongs to the aspartate/glutamate racemases family.</text>
</comment>